<organism>
    <name type="scientific">Brucella suis biovar 1 (strain 1330)</name>
    <dbReference type="NCBI Taxonomy" id="204722"/>
    <lineage>
        <taxon>Bacteria</taxon>
        <taxon>Pseudomonadati</taxon>
        <taxon>Pseudomonadota</taxon>
        <taxon>Alphaproteobacteria</taxon>
        <taxon>Hyphomicrobiales</taxon>
        <taxon>Brucellaceae</taxon>
        <taxon>Brucella/Ochrobactrum group</taxon>
        <taxon>Brucella</taxon>
    </lineage>
</organism>
<comment type="function">
    <text>Disrupting the ure2 operon has no effect on urease activity, or pathogen survival in BALB/c mice when inoculated by gavage, but confers slightly enhanced resistance to low pH killing in vitro.</text>
</comment>
<comment type="catalytic activity">
    <reaction evidence="1">
        <text>urea + 2 H2O + H(+) = hydrogencarbonate + 2 NH4(+)</text>
        <dbReference type="Rhea" id="RHEA:20557"/>
        <dbReference type="ChEBI" id="CHEBI:15377"/>
        <dbReference type="ChEBI" id="CHEBI:15378"/>
        <dbReference type="ChEBI" id="CHEBI:16199"/>
        <dbReference type="ChEBI" id="CHEBI:17544"/>
        <dbReference type="ChEBI" id="CHEBI:28938"/>
        <dbReference type="EC" id="3.5.1.5"/>
    </reaction>
</comment>
<comment type="cofactor">
    <cofactor evidence="1">
        <name>Ni cation</name>
        <dbReference type="ChEBI" id="CHEBI:25516"/>
    </cofactor>
    <text evidence="1">Binds 2 nickel ions per subunit.</text>
</comment>
<comment type="pathway">
    <text evidence="1">Nitrogen metabolism; urea degradation; CO(2) and NH(3) from urea (urease route): step 1/1.</text>
</comment>
<comment type="subunit">
    <text evidence="1">Heterotrimer of UreA (gamma), UreB (beta) and UreC (alpha) subunits. Three heterotrimers associate to form the active enzyme.</text>
</comment>
<comment type="subcellular location">
    <subcellularLocation>
        <location evidence="1">Cytoplasm</location>
    </subcellularLocation>
</comment>
<comment type="PTM">
    <text evidence="1">Carboxylation allows a single lysine to coordinate two nickel ions.</text>
</comment>
<comment type="similarity">
    <text evidence="1">Belongs to the metallo-dependent hydrolases superfamily. Urease alpha subunit family.</text>
</comment>
<keyword id="KW-0963">Cytoplasm</keyword>
<keyword id="KW-0378">Hydrolase</keyword>
<keyword id="KW-0479">Metal-binding</keyword>
<keyword id="KW-0533">Nickel</keyword>
<name>URE12_BRUSU</name>
<gene>
    <name evidence="1" type="primary">ureC2</name>
    <name type="ordered locus">BR1358</name>
    <name type="ordered locus">BS1330_I1353</name>
</gene>
<dbReference type="EC" id="3.5.1.5" evidence="1"/>
<dbReference type="EMBL" id="AE014291">
    <property type="protein sequence ID" value="AAN30272.1"/>
    <property type="molecule type" value="Genomic_DNA"/>
</dbReference>
<dbReference type="EMBL" id="CP002997">
    <property type="protein sequence ID" value="AEM18689.1"/>
    <property type="molecule type" value="Genomic_DNA"/>
</dbReference>
<dbReference type="RefSeq" id="WP_004690958.1">
    <property type="nucleotide sequence ID" value="NZ_KN046804.1"/>
</dbReference>
<dbReference type="SMR" id="Q8FZW2"/>
<dbReference type="MEROPS" id="M38.982"/>
<dbReference type="KEGG" id="bms:BR1358"/>
<dbReference type="KEGG" id="bsi:BS1330_I1353"/>
<dbReference type="PATRIC" id="fig|204722.22.peg.318"/>
<dbReference type="HOGENOM" id="CLU_000980_0_0_5"/>
<dbReference type="PhylomeDB" id="Q8FZW2"/>
<dbReference type="UniPathway" id="UPA00258">
    <property type="reaction ID" value="UER00370"/>
</dbReference>
<dbReference type="Proteomes" id="UP000007104">
    <property type="component" value="Chromosome I"/>
</dbReference>
<dbReference type="GO" id="GO:0005737">
    <property type="term" value="C:cytoplasm"/>
    <property type="evidence" value="ECO:0007669"/>
    <property type="project" value="UniProtKB-SubCell"/>
</dbReference>
<dbReference type="GO" id="GO:0016151">
    <property type="term" value="F:nickel cation binding"/>
    <property type="evidence" value="ECO:0007669"/>
    <property type="project" value="UniProtKB-UniRule"/>
</dbReference>
<dbReference type="GO" id="GO:0009039">
    <property type="term" value="F:urease activity"/>
    <property type="evidence" value="ECO:0007669"/>
    <property type="project" value="UniProtKB-UniRule"/>
</dbReference>
<dbReference type="GO" id="GO:0043419">
    <property type="term" value="P:urea catabolic process"/>
    <property type="evidence" value="ECO:0007669"/>
    <property type="project" value="UniProtKB-UniRule"/>
</dbReference>
<dbReference type="CDD" id="cd00375">
    <property type="entry name" value="Urease_alpha"/>
    <property type="match status" value="1"/>
</dbReference>
<dbReference type="Gene3D" id="3.20.20.140">
    <property type="entry name" value="Metal-dependent hydrolases"/>
    <property type="match status" value="1"/>
</dbReference>
<dbReference type="Gene3D" id="2.30.40.10">
    <property type="entry name" value="Urease, subunit C, domain 1"/>
    <property type="match status" value="1"/>
</dbReference>
<dbReference type="HAMAP" id="MF_01953">
    <property type="entry name" value="Urease_alpha"/>
    <property type="match status" value="1"/>
</dbReference>
<dbReference type="InterPro" id="IPR006680">
    <property type="entry name" value="Amidohydro-rel"/>
</dbReference>
<dbReference type="InterPro" id="IPR011059">
    <property type="entry name" value="Metal-dep_hydrolase_composite"/>
</dbReference>
<dbReference type="InterPro" id="IPR032466">
    <property type="entry name" value="Metal_Hydrolase"/>
</dbReference>
<dbReference type="InterPro" id="IPR001763">
    <property type="entry name" value="Rhodanese-like_dom"/>
</dbReference>
<dbReference type="InterPro" id="IPR011612">
    <property type="entry name" value="Urease_alpha_N_dom"/>
</dbReference>
<dbReference type="InterPro" id="IPR050112">
    <property type="entry name" value="Urease_alpha_subunit"/>
</dbReference>
<dbReference type="InterPro" id="IPR017950">
    <property type="entry name" value="Urease_AS"/>
</dbReference>
<dbReference type="InterPro" id="IPR005848">
    <property type="entry name" value="Urease_asu"/>
</dbReference>
<dbReference type="InterPro" id="IPR017951">
    <property type="entry name" value="Urease_asu_c"/>
</dbReference>
<dbReference type="InterPro" id="IPR029754">
    <property type="entry name" value="Urease_Ni-bd"/>
</dbReference>
<dbReference type="NCBIfam" id="NF009686">
    <property type="entry name" value="PRK13207.1"/>
    <property type="match status" value="1"/>
</dbReference>
<dbReference type="NCBIfam" id="NF009834">
    <property type="entry name" value="PRK13309.1"/>
    <property type="match status" value="1"/>
</dbReference>
<dbReference type="NCBIfam" id="TIGR01792">
    <property type="entry name" value="urease_alph"/>
    <property type="match status" value="1"/>
</dbReference>
<dbReference type="PANTHER" id="PTHR43440">
    <property type="entry name" value="UREASE"/>
    <property type="match status" value="1"/>
</dbReference>
<dbReference type="PANTHER" id="PTHR43440:SF1">
    <property type="entry name" value="UREASE"/>
    <property type="match status" value="1"/>
</dbReference>
<dbReference type="Pfam" id="PF01979">
    <property type="entry name" value="Amidohydro_1"/>
    <property type="match status" value="1"/>
</dbReference>
<dbReference type="Pfam" id="PF00449">
    <property type="entry name" value="Urease_alpha"/>
    <property type="match status" value="1"/>
</dbReference>
<dbReference type="PRINTS" id="PR01752">
    <property type="entry name" value="UREASE"/>
</dbReference>
<dbReference type="SUPFAM" id="SSF51338">
    <property type="entry name" value="Composite domain of metallo-dependent hydrolases"/>
    <property type="match status" value="2"/>
</dbReference>
<dbReference type="SUPFAM" id="SSF51556">
    <property type="entry name" value="Metallo-dependent hydrolases"/>
    <property type="match status" value="1"/>
</dbReference>
<dbReference type="PROSITE" id="PS01120">
    <property type="entry name" value="UREASE_1"/>
    <property type="match status" value="1"/>
</dbReference>
<dbReference type="PROSITE" id="PS00145">
    <property type="entry name" value="UREASE_2"/>
    <property type="match status" value="1"/>
</dbReference>
<dbReference type="PROSITE" id="PS51368">
    <property type="entry name" value="UREASE_3"/>
    <property type="match status" value="1"/>
</dbReference>
<reference key="1">
    <citation type="journal article" date="2002" name="Proc. Natl. Acad. Sci. U.S.A.">
        <title>The Brucella suis genome reveals fundamental similarities between animal and plant pathogens and symbionts.</title>
        <authorList>
            <person name="Paulsen I.T."/>
            <person name="Seshadri R."/>
            <person name="Nelson K.E."/>
            <person name="Eisen J.A."/>
            <person name="Heidelberg J.F."/>
            <person name="Read T.D."/>
            <person name="Dodson R.J."/>
            <person name="Umayam L.A."/>
            <person name="Brinkac L.M."/>
            <person name="Beanan M.J."/>
            <person name="Daugherty S.C."/>
            <person name="DeBoy R.T."/>
            <person name="Durkin A.S."/>
            <person name="Kolonay J.F."/>
            <person name="Madupu R."/>
            <person name="Nelson W.C."/>
            <person name="Ayodeji B."/>
            <person name="Kraul M."/>
            <person name="Shetty J."/>
            <person name="Malek J.A."/>
            <person name="Van Aken S.E."/>
            <person name="Riedmuller S."/>
            <person name="Tettelin H."/>
            <person name="Gill S.R."/>
            <person name="White O."/>
            <person name="Salzberg S.L."/>
            <person name="Hoover D.L."/>
            <person name="Lindler L.E."/>
            <person name="Halling S.M."/>
            <person name="Boyle S.M."/>
            <person name="Fraser C.M."/>
        </authorList>
    </citation>
    <scope>NUCLEOTIDE SEQUENCE [LARGE SCALE GENOMIC DNA]</scope>
    <source>
        <strain>1330</strain>
    </source>
</reference>
<reference key="2">
    <citation type="journal article" date="2011" name="J. Bacteriol.">
        <title>Revised genome sequence of Brucella suis 1330.</title>
        <authorList>
            <person name="Tae H."/>
            <person name="Shallom S."/>
            <person name="Settlage R."/>
            <person name="Preston D."/>
            <person name="Adams L.G."/>
            <person name="Garner H.R."/>
        </authorList>
    </citation>
    <scope>NUCLEOTIDE SEQUENCE [LARGE SCALE GENOMIC DNA]</scope>
    <source>
        <strain>1330</strain>
    </source>
</reference>
<reference key="3">
    <citation type="journal article" date="2007" name="BMC Microbiol.">
        <title>Brucella suis urease encoded by ure1 but not ure2 is necessary for intestinal infection of BALB/c mice.</title>
        <authorList>
            <person name="Bandara A.B."/>
            <person name="Contreras A."/>
            <person name="Contreras-Rodriguez A."/>
            <person name="Martins A.M."/>
            <person name="Dobrean V."/>
            <person name="Poff-Reichow S."/>
            <person name="Rajasekaran P."/>
            <person name="Sriranganathan N."/>
            <person name="Schurig G.G."/>
            <person name="Boyle S.M."/>
        </authorList>
    </citation>
    <scope>OPERON DISRUPTION</scope>
    <scope>LACK OF ROLE IN VIRULENCE</scope>
    <source>
        <strain>1330</strain>
    </source>
</reference>
<evidence type="ECO:0000255" key="1">
    <source>
        <dbReference type="HAMAP-Rule" id="MF_01953"/>
    </source>
</evidence>
<proteinExistence type="inferred from homology"/>
<feature type="chain" id="PRO_0000234146" description="Urease subunit alpha 2">
    <location>
        <begin position="1"/>
        <end position="573"/>
    </location>
</feature>
<feature type="domain" description="Urease" evidence="1">
    <location>
        <begin position="135"/>
        <end position="573"/>
    </location>
</feature>
<feature type="active site" description="Proton donor" evidence="1">
    <location>
        <position position="326"/>
    </location>
</feature>
<feature type="binding site" evidence="1">
    <location>
        <position position="140"/>
    </location>
    <ligand>
        <name>Ni(2+)</name>
        <dbReference type="ChEBI" id="CHEBI:49786"/>
        <label>1</label>
    </ligand>
</feature>
<feature type="binding site" evidence="1">
    <location>
        <position position="142"/>
    </location>
    <ligand>
        <name>Ni(2+)</name>
        <dbReference type="ChEBI" id="CHEBI:49786"/>
        <label>1</label>
    </ligand>
</feature>
<feature type="binding site" description="via carbamate group" evidence="1">
    <location>
        <position position="223"/>
    </location>
    <ligand>
        <name>Ni(2+)</name>
        <dbReference type="ChEBI" id="CHEBI:49786"/>
        <label>1</label>
    </ligand>
</feature>
<feature type="binding site" description="via carbamate group" evidence="1">
    <location>
        <position position="223"/>
    </location>
    <ligand>
        <name>Ni(2+)</name>
        <dbReference type="ChEBI" id="CHEBI:49786"/>
        <label>2</label>
    </ligand>
</feature>
<feature type="binding site" evidence="1">
    <location>
        <position position="225"/>
    </location>
    <ligand>
        <name>substrate</name>
    </ligand>
</feature>
<feature type="binding site" evidence="1">
    <location>
        <position position="252"/>
    </location>
    <ligand>
        <name>Ni(2+)</name>
        <dbReference type="ChEBI" id="CHEBI:49786"/>
        <label>2</label>
    </ligand>
</feature>
<feature type="binding site" evidence="1">
    <location>
        <position position="278"/>
    </location>
    <ligand>
        <name>Ni(2+)</name>
        <dbReference type="ChEBI" id="CHEBI:49786"/>
        <label>2</label>
    </ligand>
</feature>
<feature type="binding site" evidence="1">
    <location>
        <position position="366"/>
    </location>
    <ligand>
        <name>Ni(2+)</name>
        <dbReference type="ChEBI" id="CHEBI:49786"/>
        <label>1</label>
    </ligand>
</feature>
<feature type="modified residue" description="N6-carboxylysine" evidence="1">
    <location>
        <position position="223"/>
    </location>
</feature>
<sequence length="573" mass="60720">MTQISRQQYADLYGPTIGDKIRLGDSDLYVEIEKDLRATYGDELQYGGGKTLRDGMGSENFLTQEAGCLDLVITNVTVIDAIQGVVKADVGIRNGRIVGLGKAGNPSTMDGVTRGLVTGASTDAISGEHLILTAGGMDTHVHYIAPQQVEAALSNGITTLWGGGIGPVDGTNGVTTTNGPWNLEMMLRSIEGLPINFGIQGKGNSTGIAPLIEHLEAGAAGFKVHEDYGATPAAIRACLSVADEYDVSVAVHTDTLNESGYVEDTIAAFDGRSVHTYHSEGAGGGHAPDLLKVVGQNNILPSSTNPTLPCGKNSVAELFDMIMVCHNLNPKIPSDVAFAESRVRAETIVAESVLHDMGAISMIGSDSQAMGRIGETFLRAIQTADAMKKARGPLPEDAPGNDNFRVLRYIAKVTINPALTAGVGDVIGSIESGKFADLVLWEPAFFGVKPKLVLKGGLVAWANMGDPNASLPTPQPMYYRPMFAAYGSALQKTSITFVSRAAYDKGVADRFGLQRLVMPVSGTRVIGKAHMVRNSYLPNIEVDPQTFAVKVDGVHATVKPPQSISLNQLYFFS</sequence>
<protein>
    <recommendedName>
        <fullName evidence="1">Urease subunit alpha 2</fullName>
        <ecNumber evidence="1">3.5.1.5</ecNumber>
    </recommendedName>
    <alternativeName>
        <fullName evidence="1">Urea amidohydrolase subunit alpha 2</fullName>
    </alternativeName>
</protein>
<accession>Q8FZW2</accession>
<accession>G0KB43</accession>